<feature type="chain" id="PRO_0000120202" description="Cytohesin-3">
    <location>
        <begin position="1"/>
        <end position="400"/>
    </location>
</feature>
<feature type="domain" description="SEC7" evidence="4">
    <location>
        <begin position="77"/>
        <end position="206"/>
    </location>
</feature>
<feature type="domain" description="PH" evidence="3">
    <location>
        <begin position="265"/>
        <end position="381"/>
    </location>
</feature>
<feature type="region of interest" description="C-terminal autoinhibitory region" evidence="1">
    <location>
        <begin position="392"/>
        <end position="400"/>
    </location>
</feature>
<feature type="coiled-coil region" evidence="2">
    <location>
        <begin position="14"/>
        <end position="61"/>
    </location>
</feature>
<feature type="binding site" evidence="1">
    <location>
        <begin position="273"/>
        <end position="281"/>
    </location>
    <ligand>
        <name>a 1,2-diacyl-sn-glycero-3-phospho-(1D-myo-inositol-3,4,5-trisphosphate)</name>
        <dbReference type="ChEBI" id="CHEBI:57836"/>
    </ligand>
</feature>
<feature type="binding site" evidence="1">
    <location>
        <position position="285"/>
    </location>
    <ligand>
        <name>a 1,2-diacyl-sn-glycero-3-phospho-(1D-myo-inositol-3,4,5-trisphosphate)</name>
        <dbReference type="ChEBI" id="CHEBI:57836"/>
    </ligand>
</feature>
<feature type="binding site" evidence="1">
    <location>
        <position position="296"/>
    </location>
    <ligand>
        <name>a 1,2-diacyl-sn-glycero-3-phospho-(1D-myo-inositol-3,4,5-trisphosphate)</name>
        <dbReference type="ChEBI" id="CHEBI:57836"/>
    </ligand>
</feature>
<feature type="binding site" evidence="1">
    <location>
        <position position="306"/>
    </location>
    <ligand>
        <name>a 1,2-diacyl-sn-glycero-3-phospho-(1D-myo-inositol-3,4,5-trisphosphate)</name>
        <dbReference type="ChEBI" id="CHEBI:57836"/>
    </ligand>
</feature>
<feature type="binding site" evidence="1">
    <location>
        <position position="355"/>
    </location>
    <ligand>
        <name>a 1,2-diacyl-sn-glycero-3-phospho-(1D-myo-inositol-3,4,5-trisphosphate)</name>
        <dbReference type="ChEBI" id="CHEBI:57836"/>
    </ligand>
</feature>
<organism>
    <name type="scientific">Rattus norvegicus</name>
    <name type="common">Rat</name>
    <dbReference type="NCBI Taxonomy" id="10116"/>
    <lineage>
        <taxon>Eukaryota</taxon>
        <taxon>Metazoa</taxon>
        <taxon>Chordata</taxon>
        <taxon>Craniata</taxon>
        <taxon>Vertebrata</taxon>
        <taxon>Euteleostomi</taxon>
        <taxon>Mammalia</taxon>
        <taxon>Eutheria</taxon>
        <taxon>Euarchontoglires</taxon>
        <taxon>Glires</taxon>
        <taxon>Rodentia</taxon>
        <taxon>Myomorpha</taxon>
        <taxon>Muroidea</taxon>
        <taxon>Muridae</taxon>
        <taxon>Murinae</taxon>
        <taxon>Rattus</taxon>
    </lineage>
</organism>
<keyword id="KW-1003">Cell membrane</keyword>
<keyword id="KW-0175">Coiled coil</keyword>
<keyword id="KW-0963">Cytoplasm</keyword>
<keyword id="KW-0344">Guanine-nucleotide releasing factor</keyword>
<keyword id="KW-0446">Lipid-binding</keyword>
<keyword id="KW-0472">Membrane</keyword>
<keyword id="KW-1185">Reference proteome</keyword>
<proteinExistence type="evidence at transcript level"/>
<reference key="1">
    <citation type="journal article" date="1997" name="Eur. J. Cell Biol.">
        <title>Rat homologues of yeast sec7p.</title>
        <authorList>
            <person name="Telemenakis I."/>
            <person name="Benseler F."/>
            <person name="Stenius K."/>
            <person name="Suedhof T.C."/>
            <person name="Brose N."/>
        </authorList>
    </citation>
    <scope>NUCLEOTIDE SEQUENCE [MRNA]</scope>
</reference>
<reference key="2">
    <citation type="journal article" date="2002" name="Brain Res. Mol. Brain Res.">
        <title>Localization of mRNAs for subfamily of guanine nucleotide-exchange proteins (GEP) for ARFs (ADP-ribosylation factors) in the brain of developing and mature rats under normal and postaxotomy conditions.</title>
        <authorList>
            <person name="Suzuki I."/>
            <person name="Owada Y."/>
            <person name="Suzuki R."/>
            <person name="Yoshimoto T."/>
            <person name="Kondo H."/>
        </authorList>
    </citation>
    <scope>DEVELOPMENTAL STAGE</scope>
</reference>
<comment type="function">
    <text evidence="1">Promotes guanine-nucleotide exchange on ARF1. Promotes the activation of ARF factors through replacement of GDP with GTP (By similarity).</text>
</comment>
<comment type="subunit">
    <text evidence="1">Interacts with TAMALIN.</text>
</comment>
<comment type="subcellular location">
    <subcellularLocation>
        <location evidence="1">Cytoplasm</location>
        <location evidence="1">Cytosol</location>
    </subcellularLocation>
    <subcellularLocation>
        <location>Cell membrane</location>
        <topology>Peripheral membrane protein</topology>
    </subcellularLocation>
    <text evidence="1">Translocates from the cytosol to membranes enriched in phosphatidylinositol 3,4,5-trisphosphate.</text>
</comment>
<comment type="tissue specificity">
    <text>Present in all tissues tested, with highest protein levels in brain and adrenal.</text>
</comment>
<comment type="developmental stage">
    <text evidence="5">On embryonic days 15 (15 dpc) and 18 dpc, expressed in the cortical plate of the cerebrum. On postnatal days 0 (P0) and P7, a moderate expression is seen in the cerebral neocortex, hippocampal pyramidal and dentate granule cell layers. In the cerebellum, expressed in the cerebellar Purkinje cells. On P14, a decreased expression is seen throughout the brain. On P21, expression is seen in the cerebellar Purkinje cells, dentate granule cells and the hippocampal pyramidal cells.</text>
</comment>
<comment type="domain">
    <text evidence="1">Binds via its PH domain to the inositol head group of phosphatidylinositol 3,4,5-trisphosphate.</text>
</comment>
<comment type="domain">
    <text evidence="1">Autoinhibited by its C-terminal basic region.</text>
</comment>
<dbReference type="EMBL" id="U83897">
    <property type="protein sequence ID" value="AAB41445.1"/>
    <property type="molecule type" value="mRNA"/>
</dbReference>
<dbReference type="BMRB" id="P97696"/>
<dbReference type="SMR" id="P97696"/>
<dbReference type="FunCoup" id="P97696">
    <property type="interactions" value="1750"/>
</dbReference>
<dbReference type="IntAct" id="P97696">
    <property type="interactions" value="1"/>
</dbReference>
<dbReference type="MINT" id="P97696"/>
<dbReference type="STRING" id="10116.ENSRNOP00000001412"/>
<dbReference type="BindingDB" id="P97696"/>
<dbReference type="ChEMBL" id="CHEMBL1914274"/>
<dbReference type="PhosphoSitePlus" id="P97696"/>
<dbReference type="jPOST" id="P97696"/>
<dbReference type="PaxDb" id="10116-ENSRNOP00000001412"/>
<dbReference type="AGR" id="RGD:620399"/>
<dbReference type="RGD" id="620399">
    <property type="gene designation" value="Cyth3"/>
</dbReference>
<dbReference type="eggNOG" id="KOG0930">
    <property type="taxonomic scope" value="Eukaryota"/>
</dbReference>
<dbReference type="InParanoid" id="P97696"/>
<dbReference type="PhylomeDB" id="P97696"/>
<dbReference type="Reactome" id="R-RNO-6811438">
    <property type="pathway name" value="Intra-Golgi traffic"/>
</dbReference>
<dbReference type="PRO" id="PR:P97696"/>
<dbReference type="Proteomes" id="UP000002494">
    <property type="component" value="Unplaced"/>
</dbReference>
<dbReference type="GO" id="GO:0005912">
    <property type="term" value="C:adherens junction"/>
    <property type="evidence" value="ECO:0000266"/>
    <property type="project" value="RGD"/>
</dbReference>
<dbReference type="GO" id="GO:0005923">
    <property type="term" value="C:bicellular tight junction"/>
    <property type="evidence" value="ECO:0000266"/>
    <property type="project" value="RGD"/>
</dbReference>
<dbReference type="GO" id="GO:0005737">
    <property type="term" value="C:cytoplasm"/>
    <property type="evidence" value="ECO:0000266"/>
    <property type="project" value="RGD"/>
</dbReference>
<dbReference type="GO" id="GO:0005829">
    <property type="term" value="C:cytosol"/>
    <property type="evidence" value="ECO:0000250"/>
    <property type="project" value="UniProtKB"/>
</dbReference>
<dbReference type="GO" id="GO:0005886">
    <property type="term" value="C:plasma membrane"/>
    <property type="evidence" value="ECO:0000250"/>
    <property type="project" value="UniProtKB"/>
</dbReference>
<dbReference type="GO" id="GO:0001726">
    <property type="term" value="C:ruffle"/>
    <property type="evidence" value="ECO:0000266"/>
    <property type="project" value="RGD"/>
</dbReference>
<dbReference type="GO" id="GO:0005085">
    <property type="term" value="F:guanyl-nucleotide exchange factor activity"/>
    <property type="evidence" value="ECO:0000250"/>
    <property type="project" value="UniProtKB"/>
</dbReference>
<dbReference type="GO" id="GO:0005547">
    <property type="term" value="F:phosphatidylinositol-3,4,5-trisphosphate binding"/>
    <property type="evidence" value="ECO:0000250"/>
    <property type="project" value="UniProtKB"/>
</dbReference>
<dbReference type="GO" id="GO:0090162">
    <property type="term" value="P:establishment of epithelial cell polarity"/>
    <property type="evidence" value="ECO:0000266"/>
    <property type="project" value="RGD"/>
</dbReference>
<dbReference type="GO" id="GO:0048193">
    <property type="term" value="P:Golgi vesicle transport"/>
    <property type="evidence" value="ECO:0000250"/>
    <property type="project" value="UniProtKB"/>
</dbReference>
<dbReference type="GO" id="GO:0045785">
    <property type="term" value="P:positive regulation of cell adhesion"/>
    <property type="evidence" value="ECO:0000266"/>
    <property type="project" value="RGD"/>
</dbReference>
<dbReference type="GO" id="GO:0032012">
    <property type="term" value="P:regulation of ARF protein signal transduction"/>
    <property type="evidence" value="ECO:0007669"/>
    <property type="project" value="InterPro"/>
</dbReference>
<dbReference type="CDD" id="cd01252">
    <property type="entry name" value="PH_GRP1-like"/>
    <property type="match status" value="1"/>
</dbReference>
<dbReference type="CDD" id="cd00171">
    <property type="entry name" value="Sec7"/>
    <property type="match status" value="1"/>
</dbReference>
<dbReference type="FunFam" id="1.10.1000.11:FF:000002">
    <property type="entry name" value="Cytohesin 1"/>
    <property type="match status" value="1"/>
</dbReference>
<dbReference type="FunFam" id="1.10.220.20:FF:000003">
    <property type="entry name" value="Cytohesin 1"/>
    <property type="match status" value="1"/>
</dbReference>
<dbReference type="FunFam" id="2.30.29.30:FF:000009">
    <property type="entry name" value="Cytohesin 1"/>
    <property type="match status" value="1"/>
</dbReference>
<dbReference type="Gene3D" id="1.10.220.20">
    <property type="match status" value="1"/>
</dbReference>
<dbReference type="Gene3D" id="1.10.1000.11">
    <property type="entry name" value="Arf Nucleotide-binding Site Opener,domain 2"/>
    <property type="match status" value="1"/>
</dbReference>
<dbReference type="Gene3D" id="2.30.29.30">
    <property type="entry name" value="Pleckstrin-homology domain (PH domain)/Phosphotyrosine-binding domain (PTB)"/>
    <property type="match status" value="1"/>
</dbReference>
<dbReference type="InterPro" id="IPR011993">
    <property type="entry name" value="PH-like_dom_sf"/>
</dbReference>
<dbReference type="InterPro" id="IPR001849">
    <property type="entry name" value="PH_domain"/>
</dbReference>
<dbReference type="InterPro" id="IPR023394">
    <property type="entry name" value="Sec7_C_sf"/>
</dbReference>
<dbReference type="InterPro" id="IPR000904">
    <property type="entry name" value="Sec7_dom"/>
</dbReference>
<dbReference type="InterPro" id="IPR035999">
    <property type="entry name" value="Sec7_dom_sf"/>
</dbReference>
<dbReference type="PANTHER" id="PTHR10663:SF320">
    <property type="entry name" value="CYTOHESIN-3"/>
    <property type="match status" value="1"/>
</dbReference>
<dbReference type="PANTHER" id="PTHR10663">
    <property type="entry name" value="GUANYL-NUCLEOTIDE EXCHANGE FACTOR"/>
    <property type="match status" value="1"/>
</dbReference>
<dbReference type="Pfam" id="PF00169">
    <property type="entry name" value="PH"/>
    <property type="match status" value="1"/>
</dbReference>
<dbReference type="Pfam" id="PF01369">
    <property type="entry name" value="Sec7"/>
    <property type="match status" value="1"/>
</dbReference>
<dbReference type="SMART" id="SM00233">
    <property type="entry name" value="PH"/>
    <property type="match status" value="1"/>
</dbReference>
<dbReference type="SMART" id="SM00222">
    <property type="entry name" value="Sec7"/>
    <property type="match status" value="1"/>
</dbReference>
<dbReference type="SUPFAM" id="SSF50729">
    <property type="entry name" value="PH domain-like"/>
    <property type="match status" value="1"/>
</dbReference>
<dbReference type="SUPFAM" id="SSF48425">
    <property type="entry name" value="Sec7 domain"/>
    <property type="match status" value="1"/>
</dbReference>
<dbReference type="PROSITE" id="PS50003">
    <property type="entry name" value="PH_DOMAIN"/>
    <property type="match status" value="1"/>
</dbReference>
<dbReference type="PROSITE" id="PS50190">
    <property type="entry name" value="SEC7"/>
    <property type="match status" value="1"/>
</dbReference>
<sequence length="400" mass="46337">MDEGGGGEGGSVPEDLSLEEREELLDIRRRKKELIDDIERLKYEIAEVMTEIDNLTSVEESKTTQRNKQIAMGRKKFNMDPKKGIQFLIENDLLQSSPEDVAQFLYKGEGLNKTVIGDYLGERDDFNIKVLQAFVELHEFADLNLVQALRQFLWSFRLPGEAQKIDRMMEAFASRYCLCNPGVFQSTDTCYVLSFAIIMLNTSLHNHNVRDKPTAERFITMNRGINEGGDLPEELLRNLYESIKNEPFKIPEDDGNDLTHTFFNPDREGWLLKLGGGRVKTWKRRWFILTDNCLYYFEYTTDKEPRGIIPLENLSIREVEDPRKPNCFELYNPSHKGQVIKACKTEADGRVVEGNHVVYRISAPSPEEKEEWMKSIKASISRDPFYDMLATRKRRIANKK</sequence>
<gene>
    <name type="primary">Cyth3</name>
    <name type="synonym">Pscd3</name>
    <name type="synonym">Sec7c</name>
</gene>
<accession>P97696</accession>
<protein>
    <recommendedName>
        <fullName>Cytohesin-3</fullName>
    </recommendedName>
    <alternativeName>
        <fullName>PH, SEC7 and coiled-coil domain-containing protein 3</fullName>
    </alternativeName>
    <alternativeName>
        <fullName>SEC7 homolog C</fullName>
        <shortName>rSec7-3</shortName>
    </alternativeName>
</protein>
<name>CYH3_RAT</name>
<evidence type="ECO:0000250" key="1"/>
<evidence type="ECO:0000255" key="2"/>
<evidence type="ECO:0000255" key="3">
    <source>
        <dbReference type="PROSITE-ProRule" id="PRU00145"/>
    </source>
</evidence>
<evidence type="ECO:0000255" key="4">
    <source>
        <dbReference type="PROSITE-ProRule" id="PRU00189"/>
    </source>
</evidence>
<evidence type="ECO:0000269" key="5">
    <source>
    </source>
</evidence>